<accession>B5BKQ9</accession>
<evidence type="ECO:0000255" key="1">
    <source>
        <dbReference type="HAMAP-Rule" id="MF_00001"/>
    </source>
</evidence>
<sequence length="311" mass="34384">MANPLYQKHIISINDLSRDDLNLVLATAAKLKANPQPELLKHKVIASCFFEASTRTRLSFETSMHRLGASVVGFSDSANTSLGKKGETLADTISVISTYVDAIVMRHPQEGAARLATEFSGQVPVLNAGDGSNQHPTQTLLDLFTIQETQGRLDNLHIAMVGDLKYGRTVHSLTQALAKFSGNRFYFIAPDALAMPQYILDMLDEKGMAWSLHGSIEEVMADVDILYMTRVQKERLDPSEYANVKAQFVLRASDLNGARENMKVLHPLPRIDEITTDVDKTPHAWYFQQAGNGIFARQALLALVLNSELSL</sequence>
<organism>
    <name type="scientific">Salmonella paratyphi A (strain AKU_12601)</name>
    <dbReference type="NCBI Taxonomy" id="554290"/>
    <lineage>
        <taxon>Bacteria</taxon>
        <taxon>Pseudomonadati</taxon>
        <taxon>Pseudomonadota</taxon>
        <taxon>Gammaproteobacteria</taxon>
        <taxon>Enterobacterales</taxon>
        <taxon>Enterobacteriaceae</taxon>
        <taxon>Salmonella</taxon>
    </lineage>
</organism>
<proteinExistence type="inferred from homology"/>
<gene>
    <name evidence="1" type="primary">pyrB</name>
    <name type="ordered locus">SSPA3958</name>
</gene>
<reference key="1">
    <citation type="journal article" date="2009" name="BMC Genomics">
        <title>Pseudogene accumulation in the evolutionary histories of Salmonella enterica serovars Paratyphi A and Typhi.</title>
        <authorList>
            <person name="Holt K.E."/>
            <person name="Thomson N.R."/>
            <person name="Wain J."/>
            <person name="Langridge G.C."/>
            <person name="Hasan R."/>
            <person name="Bhutta Z.A."/>
            <person name="Quail M.A."/>
            <person name="Norbertczak H."/>
            <person name="Walker D."/>
            <person name="Simmonds M."/>
            <person name="White B."/>
            <person name="Bason N."/>
            <person name="Mungall K."/>
            <person name="Dougan G."/>
            <person name="Parkhill J."/>
        </authorList>
    </citation>
    <scope>NUCLEOTIDE SEQUENCE [LARGE SCALE GENOMIC DNA]</scope>
    <source>
        <strain>AKU_12601</strain>
    </source>
</reference>
<dbReference type="EC" id="2.1.3.2" evidence="1"/>
<dbReference type="EMBL" id="FM200053">
    <property type="protein sequence ID" value="CAR62247.1"/>
    <property type="molecule type" value="Genomic_DNA"/>
</dbReference>
<dbReference type="RefSeq" id="WP_000013055.1">
    <property type="nucleotide sequence ID" value="NC_011147.1"/>
</dbReference>
<dbReference type="SMR" id="B5BKQ9"/>
<dbReference type="KEGG" id="sek:SSPA3958"/>
<dbReference type="HOGENOM" id="CLU_043846_1_2_6"/>
<dbReference type="UniPathway" id="UPA00070">
    <property type="reaction ID" value="UER00116"/>
</dbReference>
<dbReference type="Proteomes" id="UP000001869">
    <property type="component" value="Chromosome"/>
</dbReference>
<dbReference type="GO" id="GO:0005829">
    <property type="term" value="C:cytosol"/>
    <property type="evidence" value="ECO:0007669"/>
    <property type="project" value="TreeGrafter"/>
</dbReference>
<dbReference type="GO" id="GO:0016597">
    <property type="term" value="F:amino acid binding"/>
    <property type="evidence" value="ECO:0007669"/>
    <property type="project" value="InterPro"/>
</dbReference>
<dbReference type="GO" id="GO:0004070">
    <property type="term" value="F:aspartate carbamoyltransferase activity"/>
    <property type="evidence" value="ECO:0007669"/>
    <property type="project" value="UniProtKB-UniRule"/>
</dbReference>
<dbReference type="GO" id="GO:0006207">
    <property type="term" value="P:'de novo' pyrimidine nucleobase biosynthetic process"/>
    <property type="evidence" value="ECO:0007669"/>
    <property type="project" value="InterPro"/>
</dbReference>
<dbReference type="GO" id="GO:0044205">
    <property type="term" value="P:'de novo' UMP biosynthetic process"/>
    <property type="evidence" value="ECO:0007669"/>
    <property type="project" value="UniProtKB-UniRule"/>
</dbReference>
<dbReference type="GO" id="GO:0006520">
    <property type="term" value="P:amino acid metabolic process"/>
    <property type="evidence" value="ECO:0007669"/>
    <property type="project" value="InterPro"/>
</dbReference>
<dbReference type="FunFam" id="3.40.50.1370:FF:000001">
    <property type="entry name" value="Aspartate carbamoyltransferase"/>
    <property type="match status" value="1"/>
</dbReference>
<dbReference type="FunFam" id="3.40.50.1370:FF:000002">
    <property type="entry name" value="Aspartate carbamoyltransferase 2"/>
    <property type="match status" value="1"/>
</dbReference>
<dbReference type="Gene3D" id="3.40.50.1370">
    <property type="entry name" value="Aspartate/ornithine carbamoyltransferase"/>
    <property type="match status" value="2"/>
</dbReference>
<dbReference type="HAMAP" id="MF_00001">
    <property type="entry name" value="Asp_carb_tr"/>
    <property type="match status" value="1"/>
</dbReference>
<dbReference type="InterPro" id="IPR006132">
    <property type="entry name" value="Asp/Orn_carbamoyltranf_P-bd"/>
</dbReference>
<dbReference type="InterPro" id="IPR006130">
    <property type="entry name" value="Asp/Orn_carbamoylTrfase"/>
</dbReference>
<dbReference type="InterPro" id="IPR036901">
    <property type="entry name" value="Asp/Orn_carbamoylTrfase_sf"/>
</dbReference>
<dbReference type="InterPro" id="IPR002082">
    <property type="entry name" value="Asp_carbamoyltransf"/>
</dbReference>
<dbReference type="InterPro" id="IPR006131">
    <property type="entry name" value="Asp_carbamoyltransf_Asp/Orn-bd"/>
</dbReference>
<dbReference type="NCBIfam" id="TIGR00670">
    <property type="entry name" value="asp_carb_tr"/>
    <property type="match status" value="1"/>
</dbReference>
<dbReference type="NCBIfam" id="NF002032">
    <property type="entry name" value="PRK00856.1"/>
    <property type="match status" value="1"/>
</dbReference>
<dbReference type="PANTHER" id="PTHR45753:SF6">
    <property type="entry name" value="ASPARTATE CARBAMOYLTRANSFERASE"/>
    <property type="match status" value="1"/>
</dbReference>
<dbReference type="PANTHER" id="PTHR45753">
    <property type="entry name" value="ORNITHINE CARBAMOYLTRANSFERASE, MITOCHONDRIAL"/>
    <property type="match status" value="1"/>
</dbReference>
<dbReference type="Pfam" id="PF00185">
    <property type="entry name" value="OTCace"/>
    <property type="match status" value="1"/>
</dbReference>
<dbReference type="Pfam" id="PF02729">
    <property type="entry name" value="OTCace_N"/>
    <property type="match status" value="1"/>
</dbReference>
<dbReference type="PRINTS" id="PR00100">
    <property type="entry name" value="AOTCASE"/>
</dbReference>
<dbReference type="PRINTS" id="PR00101">
    <property type="entry name" value="ATCASE"/>
</dbReference>
<dbReference type="SUPFAM" id="SSF53671">
    <property type="entry name" value="Aspartate/ornithine carbamoyltransferase"/>
    <property type="match status" value="1"/>
</dbReference>
<dbReference type="PROSITE" id="PS00097">
    <property type="entry name" value="CARBAMOYLTRANSFERASE"/>
    <property type="match status" value="1"/>
</dbReference>
<comment type="function">
    <text evidence="1">Catalyzes the condensation of carbamoyl phosphate and aspartate to form carbamoyl aspartate and inorganic phosphate, the committed step in the de novo pyrimidine nucleotide biosynthesis pathway.</text>
</comment>
<comment type="catalytic activity">
    <reaction evidence="1">
        <text>carbamoyl phosphate + L-aspartate = N-carbamoyl-L-aspartate + phosphate + H(+)</text>
        <dbReference type="Rhea" id="RHEA:20013"/>
        <dbReference type="ChEBI" id="CHEBI:15378"/>
        <dbReference type="ChEBI" id="CHEBI:29991"/>
        <dbReference type="ChEBI" id="CHEBI:32814"/>
        <dbReference type="ChEBI" id="CHEBI:43474"/>
        <dbReference type="ChEBI" id="CHEBI:58228"/>
        <dbReference type="EC" id="2.1.3.2"/>
    </reaction>
</comment>
<comment type="pathway">
    <text evidence="1">Pyrimidine metabolism; UMP biosynthesis via de novo pathway; (S)-dihydroorotate from bicarbonate: step 2/3.</text>
</comment>
<comment type="subunit">
    <text evidence="1">Heterododecamer (2C3:3R2) of six catalytic PyrB chains organized as two trimers (C3), and six regulatory PyrI chains organized as three dimers (R2).</text>
</comment>
<comment type="similarity">
    <text evidence="1">Belongs to the aspartate/ornithine carbamoyltransferase superfamily. ATCase family.</text>
</comment>
<name>PYRB_SALPK</name>
<keyword id="KW-0665">Pyrimidine biosynthesis</keyword>
<keyword id="KW-0808">Transferase</keyword>
<protein>
    <recommendedName>
        <fullName evidence="1">Aspartate carbamoyltransferase catalytic subunit</fullName>
        <ecNumber evidence="1">2.1.3.2</ecNumber>
    </recommendedName>
    <alternativeName>
        <fullName evidence="1">Aspartate transcarbamylase</fullName>
        <shortName evidence="1">ATCase</shortName>
    </alternativeName>
</protein>
<feature type="chain" id="PRO_1000088800" description="Aspartate carbamoyltransferase catalytic subunit">
    <location>
        <begin position="1"/>
        <end position="311"/>
    </location>
</feature>
<feature type="binding site" evidence="1">
    <location>
        <position position="55"/>
    </location>
    <ligand>
        <name>carbamoyl phosphate</name>
        <dbReference type="ChEBI" id="CHEBI:58228"/>
    </ligand>
</feature>
<feature type="binding site" evidence="1">
    <location>
        <position position="56"/>
    </location>
    <ligand>
        <name>carbamoyl phosphate</name>
        <dbReference type="ChEBI" id="CHEBI:58228"/>
    </ligand>
</feature>
<feature type="binding site" evidence="1">
    <location>
        <position position="85"/>
    </location>
    <ligand>
        <name>L-aspartate</name>
        <dbReference type="ChEBI" id="CHEBI:29991"/>
    </ligand>
</feature>
<feature type="binding site" evidence="1">
    <location>
        <position position="106"/>
    </location>
    <ligand>
        <name>carbamoyl phosphate</name>
        <dbReference type="ChEBI" id="CHEBI:58228"/>
    </ligand>
</feature>
<feature type="binding site" evidence="1">
    <location>
        <position position="135"/>
    </location>
    <ligand>
        <name>carbamoyl phosphate</name>
        <dbReference type="ChEBI" id="CHEBI:58228"/>
    </ligand>
</feature>
<feature type="binding site" evidence="1">
    <location>
        <position position="138"/>
    </location>
    <ligand>
        <name>carbamoyl phosphate</name>
        <dbReference type="ChEBI" id="CHEBI:58228"/>
    </ligand>
</feature>
<feature type="binding site" evidence="1">
    <location>
        <position position="168"/>
    </location>
    <ligand>
        <name>L-aspartate</name>
        <dbReference type="ChEBI" id="CHEBI:29991"/>
    </ligand>
</feature>
<feature type="binding site" evidence="1">
    <location>
        <position position="230"/>
    </location>
    <ligand>
        <name>L-aspartate</name>
        <dbReference type="ChEBI" id="CHEBI:29991"/>
    </ligand>
</feature>
<feature type="binding site" evidence="1">
    <location>
        <position position="268"/>
    </location>
    <ligand>
        <name>carbamoyl phosphate</name>
        <dbReference type="ChEBI" id="CHEBI:58228"/>
    </ligand>
</feature>
<feature type="binding site" evidence="1">
    <location>
        <position position="269"/>
    </location>
    <ligand>
        <name>carbamoyl phosphate</name>
        <dbReference type="ChEBI" id="CHEBI:58228"/>
    </ligand>
</feature>